<evidence type="ECO:0000255" key="1">
    <source>
        <dbReference type="HAMAP-Rule" id="MF_00178"/>
    </source>
</evidence>
<accession>A4J6A4</accession>
<protein>
    <recommendedName>
        <fullName evidence="1">6,7-dimethyl-8-ribityllumazine synthase</fullName>
        <shortName evidence="1">DMRL synthase</shortName>
        <shortName evidence="1">LS</shortName>
        <shortName evidence="1">Lumazine synthase</shortName>
        <ecNumber evidence="1">2.5.1.78</ecNumber>
    </recommendedName>
</protein>
<comment type="function">
    <text evidence="1">Catalyzes the formation of 6,7-dimethyl-8-ribityllumazine by condensation of 5-amino-6-(D-ribitylamino)uracil with 3,4-dihydroxy-2-butanone 4-phosphate. This is the penultimate step in the biosynthesis of riboflavin.</text>
</comment>
<comment type="catalytic activity">
    <reaction evidence="1">
        <text>(2S)-2-hydroxy-3-oxobutyl phosphate + 5-amino-6-(D-ribitylamino)uracil = 6,7-dimethyl-8-(1-D-ribityl)lumazine + phosphate + 2 H2O + H(+)</text>
        <dbReference type="Rhea" id="RHEA:26152"/>
        <dbReference type="ChEBI" id="CHEBI:15377"/>
        <dbReference type="ChEBI" id="CHEBI:15378"/>
        <dbReference type="ChEBI" id="CHEBI:15934"/>
        <dbReference type="ChEBI" id="CHEBI:43474"/>
        <dbReference type="ChEBI" id="CHEBI:58201"/>
        <dbReference type="ChEBI" id="CHEBI:58830"/>
        <dbReference type="EC" id="2.5.1.78"/>
    </reaction>
</comment>
<comment type="pathway">
    <text evidence="1">Cofactor biosynthesis; riboflavin biosynthesis; riboflavin from 2-hydroxy-3-oxobutyl phosphate and 5-amino-6-(D-ribitylamino)uracil: step 1/2.</text>
</comment>
<comment type="similarity">
    <text evidence="1">Belongs to the DMRL synthase family.</text>
</comment>
<reference key="1">
    <citation type="submission" date="2007-03" db="EMBL/GenBank/DDBJ databases">
        <title>Complete sequence of Desulfotomaculum reducens MI-1.</title>
        <authorList>
            <consortium name="US DOE Joint Genome Institute"/>
            <person name="Copeland A."/>
            <person name="Lucas S."/>
            <person name="Lapidus A."/>
            <person name="Barry K."/>
            <person name="Detter J.C."/>
            <person name="Glavina del Rio T."/>
            <person name="Hammon N."/>
            <person name="Israni S."/>
            <person name="Dalin E."/>
            <person name="Tice H."/>
            <person name="Pitluck S."/>
            <person name="Sims D."/>
            <person name="Brettin T."/>
            <person name="Bruce D."/>
            <person name="Han C."/>
            <person name="Tapia R."/>
            <person name="Schmutz J."/>
            <person name="Larimer F."/>
            <person name="Land M."/>
            <person name="Hauser L."/>
            <person name="Kyrpides N."/>
            <person name="Kim E."/>
            <person name="Tebo B.M."/>
            <person name="Richardson P."/>
        </authorList>
    </citation>
    <scope>NUCLEOTIDE SEQUENCE [LARGE SCALE GENOMIC DNA]</scope>
    <source>
        <strain>ATCC BAA-1160 / DSM 100696 / MI-1</strain>
    </source>
</reference>
<keyword id="KW-1185">Reference proteome</keyword>
<keyword id="KW-0686">Riboflavin biosynthesis</keyword>
<keyword id="KW-0808">Transferase</keyword>
<dbReference type="EC" id="2.5.1.78" evidence="1"/>
<dbReference type="EMBL" id="CP000612">
    <property type="protein sequence ID" value="ABO50607.1"/>
    <property type="molecule type" value="Genomic_DNA"/>
</dbReference>
<dbReference type="RefSeq" id="WP_011878413.1">
    <property type="nucleotide sequence ID" value="NC_009253.1"/>
</dbReference>
<dbReference type="SMR" id="A4J6A4"/>
<dbReference type="STRING" id="349161.Dred_2090"/>
<dbReference type="KEGG" id="drm:Dred_2090"/>
<dbReference type="eggNOG" id="COG0054">
    <property type="taxonomic scope" value="Bacteria"/>
</dbReference>
<dbReference type="HOGENOM" id="CLU_089358_1_1_9"/>
<dbReference type="OrthoDB" id="9809709at2"/>
<dbReference type="UniPathway" id="UPA00275">
    <property type="reaction ID" value="UER00404"/>
</dbReference>
<dbReference type="Proteomes" id="UP000001556">
    <property type="component" value="Chromosome"/>
</dbReference>
<dbReference type="GO" id="GO:0005829">
    <property type="term" value="C:cytosol"/>
    <property type="evidence" value="ECO:0007669"/>
    <property type="project" value="TreeGrafter"/>
</dbReference>
<dbReference type="GO" id="GO:0009349">
    <property type="term" value="C:riboflavin synthase complex"/>
    <property type="evidence" value="ECO:0007669"/>
    <property type="project" value="InterPro"/>
</dbReference>
<dbReference type="GO" id="GO:0000906">
    <property type="term" value="F:6,7-dimethyl-8-ribityllumazine synthase activity"/>
    <property type="evidence" value="ECO:0007669"/>
    <property type="project" value="UniProtKB-UniRule"/>
</dbReference>
<dbReference type="GO" id="GO:0009231">
    <property type="term" value="P:riboflavin biosynthetic process"/>
    <property type="evidence" value="ECO:0007669"/>
    <property type="project" value="UniProtKB-UniRule"/>
</dbReference>
<dbReference type="CDD" id="cd09209">
    <property type="entry name" value="Lumazine_synthase-I"/>
    <property type="match status" value="1"/>
</dbReference>
<dbReference type="FunFam" id="3.40.50.960:FF:000001">
    <property type="entry name" value="6,7-dimethyl-8-ribityllumazine synthase"/>
    <property type="match status" value="1"/>
</dbReference>
<dbReference type="Gene3D" id="3.40.50.960">
    <property type="entry name" value="Lumazine/riboflavin synthase"/>
    <property type="match status" value="1"/>
</dbReference>
<dbReference type="HAMAP" id="MF_00178">
    <property type="entry name" value="Lumazine_synth"/>
    <property type="match status" value="1"/>
</dbReference>
<dbReference type="InterPro" id="IPR034964">
    <property type="entry name" value="LS"/>
</dbReference>
<dbReference type="InterPro" id="IPR002180">
    <property type="entry name" value="LS/RS"/>
</dbReference>
<dbReference type="InterPro" id="IPR036467">
    <property type="entry name" value="LS/RS_sf"/>
</dbReference>
<dbReference type="NCBIfam" id="TIGR00114">
    <property type="entry name" value="lumazine-synth"/>
    <property type="match status" value="1"/>
</dbReference>
<dbReference type="NCBIfam" id="NF000812">
    <property type="entry name" value="PRK00061.1-4"/>
    <property type="match status" value="1"/>
</dbReference>
<dbReference type="PANTHER" id="PTHR21058:SF0">
    <property type="entry name" value="6,7-DIMETHYL-8-RIBITYLLUMAZINE SYNTHASE"/>
    <property type="match status" value="1"/>
</dbReference>
<dbReference type="PANTHER" id="PTHR21058">
    <property type="entry name" value="6,7-DIMETHYL-8-RIBITYLLUMAZINE SYNTHASE DMRL SYNTHASE LUMAZINE SYNTHASE"/>
    <property type="match status" value="1"/>
</dbReference>
<dbReference type="Pfam" id="PF00885">
    <property type="entry name" value="DMRL_synthase"/>
    <property type="match status" value="1"/>
</dbReference>
<dbReference type="SUPFAM" id="SSF52121">
    <property type="entry name" value="Lumazine synthase"/>
    <property type="match status" value="1"/>
</dbReference>
<proteinExistence type="inferred from homology"/>
<sequence>MPKVFEGHLLGQELKFGIVVGRFNEFITNKLLSGALDALKRHGVEDENVEIAYVPGAYEIPLVAKKMADSKRYDGVICLGAVIRGATPHFEYVSAEVSKGVAKISLDSNLPVIFGVLTVDTIEQAIERAGTKAGNKGWEAANAAIEMANLLKTI</sequence>
<feature type="chain" id="PRO_1000098186" description="6,7-dimethyl-8-ribityllumazine synthase">
    <location>
        <begin position="1"/>
        <end position="154"/>
    </location>
</feature>
<feature type="active site" description="Proton donor" evidence="1">
    <location>
        <position position="89"/>
    </location>
</feature>
<feature type="binding site" evidence="1">
    <location>
        <position position="23"/>
    </location>
    <ligand>
        <name>5-amino-6-(D-ribitylamino)uracil</name>
        <dbReference type="ChEBI" id="CHEBI:15934"/>
    </ligand>
</feature>
<feature type="binding site" evidence="1">
    <location>
        <begin position="57"/>
        <end position="59"/>
    </location>
    <ligand>
        <name>5-amino-6-(D-ribitylamino)uracil</name>
        <dbReference type="ChEBI" id="CHEBI:15934"/>
    </ligand>
</feature>
<feature type="binding site" evidence="1">
    <location>
        <begin position="81"/>
        <end position="83"/>
    </location>
    <ligand>
        <name>5-amino-6-(D-ribitylamino)uracil</name>
        <dbReference type="ChEBI" id="CHEBI:15934"/>
    </ligand>
</feature>
<feature type="binding site" evidence="1">
    <location>
        <begin position="86"/>
        <end position="87"/>
    </location>
    <ligand>
        <name>(2S)-2-hydroxy-3-oxobutyl phosphate</name>
        <dbReference type="ChEBI" id="CHEBI:58830"/>
    </ligand>
</feature>
<feature type="binding site" evidence="1">
    <location>
        <position position="114"/>
    </location>
    <ligand>
        <name>5-amino-6-(D-ribitylamino)uracil</name>
        <dbReference type="ChEBI" id="CHEBI:15934"/>
    </ligand>
</feature>
<feature type="binding site" evidence="1">
    <location>
        <position position="128"/>
    </location>
    <ligand>
        <name>(2S)-2-hydroxy-3-oxobutyl phosphate</name>
        <dbReference type="ChEBI" id="CHEBI:58830"/>
    </ligand>
</feature>
<name>RISB_DESRM</name>
<gene>
    <name evidence="1" type="primary">ribH</name>
    <name type="ordered locus">Dred_2090</name>
</gene>
<organism>
    <name type="scientific">Desulforamulus reducens (strain ATCC BAA-1160 / DSM 100696 / MI-1)</name>
    <name type="common">Desulfotomaculum reducens</name>
    <dbReference type="NCBI Taxonomy" id="349161"/>
    <lineage>
        <taxon>Bacteria</taxon>
        <taxon>Bacillati</taxon>
        <taxon>Bacillota</taxon>
        <taxon>Clostridia</taxon>
        <taxon>Eubacteriales</taxon>
        <taxon>Peptococcaceae</taxon>
        <taxon>Desulforamulus</taxon>
    </lineage>
</organism>